<protein>
    <recommendedName>
        <fullName evidence="1">Ketol-acid reductoisomerase (NADP(+))</fullName>
        <shortName evidence="1">KARI</shortName>
        <ecNumber evidence="1">1.1.1.86</ecNumber>
    </recommendedName>
    <alternativeName>
        <fullName evidence="1">Acetohydroxy-acid isomeroreductase</fullName>
        <shortName evidence="1">AHIR</shortName>
    </alternativeName>
    <alternativeName>
        <fullName evidence="1">Alpha-keto-beta-hydroxylacyl reductoisomerase</fullName>
    </alternativeName>
    <alternativeName>
        <fullName evidence="1">Ketol-acid reductoisomerase type 1</fullName>
    </alternativeName>
    <alternativeName>
        <fullName evidence="1">Ketol-acid reductoisomerase type I</fullName>
    </alternativeName>
</protein>
<dbReference type="EC" id="1.1.1.86" evidence="1"/>
<dbReference type="EMBL" id="AE000513">
    <property type="protein sequence ID" value="AAF11083.1"/>
    <property type="status" value="ALT_INIT"/>
    <property type="molecule type" value="Genomic_DNA"/>
</dbReference>
<dbReference type="PIR" id="C75387">
    <property type="entry name" value="C75387"/>
</dbReference>
<dbReference type="RefSeq" id="NP_295242.1">
    <property type="nucleotide sequence ID" value="NC_001263.1"/>
</dbReference>
<dbReference type="RefSeq" id="WP_027480217.1">
    <property type="nucleotide sequence ID" value="NC_001263.1"/>
</dbReference>
<dbReference type="SMR" id="Q9RU74"/>
<dbReference type="FunCoup" id="Q9RU74">
    <property type="interactions" value="419"/>
</dbReference>
<dbReference type="STRING" id="243230.DR_1519"/>
<dbReference type="PaxDb" id="243230-DR_1519"/>
<dbReference type="EnsemblBacteria" id="AAF11083">
    <property type="protein sequence ID" value="AAF11083"/>
    <property type="gene ID" value="DR_1519"/>
</dbReference>
<dbReference type="GeneID" id="69517758"/>
<dbReference type="KEGG" id="dra:DR_1519"/>
<dbReference type="PATRIC" id="fig|243230.17.peg.1721"/>
<dbReference type="eggNOG" id="COG0059">
    <property type="taxonomic scope" value="Bacteria"/>
</dbReference>
<dbReference type="HOGENOM" id="CLU_033821_0_1_0"/>
<dbReference type="InParanoid" id="Q9RU74"/>
<dbReference type="OrthoDB" id="9804088at2"/>
<dbReference type="UniPathway" id="UPA00047">
    <property type="reaction ID" value="UER00056"/>
</dbReference>
<dbReference type="UniPathway" id="UPA00049">
    <property type="reaction ID" value="UER00060"/>
</dbReference>
<dbReference type="Proteomes" id="UP000002524">
    <property type="component" value="Chromosome 1"/>
</dbReference>
<dbReference type="GO" id="GO:0005829">
    <property type="term" value="C:cytosol"/>
    <property type="evidence" value="ECO:0000318"/>
    <property type="project" value="GO_Central"/>
</dbReference>
<dbReference type="GO" id="GO:0004455">
    <property type="term" value="F:ketol-acid reductoisomerase activity"/>
    <property type="evidence" value="ECO:0000318"/>
    <property type="project" value="GO_Central"/>
</dbReference>
<dbReference type="GO" id="GO:0000287">
    <property type="term" value="F:magnesium ion binding"/>
    <property type="evidence" value="ECO:0007669"/>
    <property type="project" value="UniProtKB-UniRule"/>
</dbReference>
<dbReference type="GO" id="GO:0050661">
    <property type="term" value="F:NADP binding"/>
    <property type="evidence" value="ECO:0007669"/>
    <property type="project" value="InterPro"/>
</dbReference>
<dbReference type="GO" id="GO:0009097">
    <property type="term" value="P:isoleucine biosynthetic process"/>
    <property type="evidence" value="ECO:0000318"/>
    <property type="project" value="GO_Central"/>
</dbReference>
<dbReference type="GO" id="GO:0009099">
    <property type="term" value="P:L-valine biosynthetic process"/>
    <property type="evidence" value="ECO:0000318"/>
    <property type="project" value="GO_Central"/>
</dbReference>
<dbReference type="FunFam" id="3.40.50.720:FF:000023">
    <property type="entry name" value="Ketol-acid reductoisomerase (NADP(+))"/>
    <property type="match status" value="1"/>
</dbReference>
<dbReference type="Gene3D" id="6.10.240.10">
    <property type="match status" value="1"/>
</dbReference>
<dbReference type="Gene3D" id="3.40.50.720">
    <property type="entry name" value="NAD(P)-binding Rossmann-like Domain"/>
    <property type="match status" value="1"/>
</dbReference>
<dbReference type="HAMAP" id="MF_00435">
    <property type="entry name" value="IlvC"/>
    <property type="match status" value="1"/>
</dbReference>
<dbReference type="InterPro" id="IPR008927">
    <property type="entry name" value="6-PGluconate_DH-like_C_sf"/>
</dbReference>
<dbReference type="InterPro" id="IPR013023">
    <property type="entry name" value="KARI"/>
</dbReference>
<dbReference type="InterPro" id="IPR000506">
    <property type="entry name" value="KARI_C"/>
</dbReference>
<dbReference type="InterPro" id="IPR013116">
    <property type="entry name" value="KARI_N"/>
</dbReference>
<dbReference type="InterPro" id="IPR014359">
    <property type="entry name" value="KARI_prok"/>
</dbReference>
<dbReference type="InterPro" id="IPR036291">
    <property type="entry name" value="NAD(P)-bd_dom_sf"/>
</dbReference>
<dbReference type="NCBIfam" id="TIGR00465">
    <property type="entry name" value="ilvC"/>
    <property type="match status" value="1"/>
</dbReference>
<dbReference type="NCBIfam" id="NF004017">
    <property type="entry name" value="PRK05479.1"/>
    <property type="match status" value="1"/>
</dbReference>
<dbReference type="NCBIfam" id="NF009940">
    <property type="entry name" value="PRK13403.1"/>
    <property type="match status" value="1"/>
</dbReference>
<dbReference type="PANTHER" id="PTHR21371">
    <property type="entry name" value="KETOL-ACID REDUCTOISOMERASE, MITOCHONDRIAL"/>
    <property type="match status" value="1"/>
</dbReference>
<dbReference type="PANTHER" id="PTHR21371:SF1">
    <property type="entry name" value="KETOL-ACID REDUCTOISOMERASE, MITOCHONDRIAL"/>
    <property type="match status" value="1"/>
</dbReference>
<dbReference type="Pfam" id="PF01450">
    <property type="entry name" value="KARI_C"/>
    <property type="match status" value="1"/>
</dbReference>
<dbReference type="Pfam" id="PF07991">
    <property type="entry name" value="KARI_N"/>
    <property type="match status" value="1"/>
</dbReference>
<dbReference type="PIRSF" id="PIRSF000116">
    <property type="entry name" value="IlvC_gammaproteo"/>
    <property type="match status" value="1"/>
</dbReference>
<dbReference type="SUPFAM" id="SSF48179">
    <property type="entry name" value="6-phosphogluconate dehydrogenase C-terminal domain-like"/>
    <property type="match status" value="1"/>
</dbReference>
<dbReference type="SUPFAM" id="SSF51735">
    <property type="entry name" value="NAD(P)-binding Rossmann-fold domains"/>
    <property type="match status" value="1"/>
</dbReference>
<dbReference type="PROSITE" id="PS51851">
    <property type="entry name" value="KARI_C"/>
    <property type="match status" value="1"/>
</dbReference>
<dbReference type="PROSITE" id="PS51850">
    <property type="entry name" value="KARI_N"/>
    <property type="match status" value="1"/>
</dbReference>
<proteinExistence type="inferred from homology"/>
<reference key="1">
    <citation type="journal article" date="1999" name="Science">
        <title>Genome sequence of the radioresistant bacterium Deinococcus radiodurans R1.</title>
        <authorList>
            <person name="White O."/>
            <person name="Eisen J.A."/>
            <person name="Heidelberg J.F."/>
            <person name="Hickey E.K."/>
            <person name="Peterson J.D."/>
            <person name="Dodson R.J."/>
            <person name="Haft D.H."/>
            <person name="Gwinn M.L."/>
            <person name="Nelson W.C."/>
            <person name="Richardson D.L."/>
            <person name="Moffat K.S."/>
            <person name="Qin H."/>
            <person name="Jiang L."/>
            <person name="Pamphile W."/>
            <person name="Crosby M."/>
            <person name="Shen M."/>
            <person name="Vamathevan J.J."/>
            <person name="Lam P."/>
            <person name="McDonald L.A."/>
            <person name="Utterback T.R."/>
            <person name="Zalewski C."/>
            <person name="Makarova K.S."/>
            <person name="Aravind L."/>
            <person name="Daly M.J."/>
            <person name="Minton K.W."/>
            <person name="Fleischmann R.D."/>
            <person name="Ketchum K.A."/>
            <person name="Nelson K.E."/>
            <person name="Salzberg S.L."/>
            <person name="Smith H.O."/>
            <person name="Venter J.C."/>
            <person name="Fraser C.M."/>
        </authorList>
    </citation>
    <scope>NUCLEOTIDE SEQUENCE [LARGE SCALE GENOMIC DNA]</scope>
    <source>
        <strain>ATCC 13939 / DSM 20539 / JCM 16871 / CCUG 27074 / LMG 4051 / NBRC 15346 / NCIMB 9279 / VKM B-1422 / R1</strain>
    </source>
</reference>
<feature type="chain" id="PRO_0000151307" description="Ketol-acid reductoisomerase (NADP(+))">
    <location>
        <begin position="1"/>
        <end position="336"/>
    </location>
</feature>
<feature type="domain" description="KARI N-terminal Rossmann" evidence="2">
    <location>
        <begin position="3"/>
        <end position="183"/>
    </location>
</feature>
<feature type="domain" description="KARI C-terminal knotted" evidence="3">
    <location>
        <begin position="184"/>
        <end position="329"/>
    </location>
</feature>
<feature type="active site" evidence="1">
    <location>
        <position position="109"/>
    </location>
</feature>
<feature type="binding site" evidence="1">
    <location>
        <begin position="26"/>
        <end position="29"/>
    </location>
    <ligand>
        <name>NADP(+)</name>
        <dbReference type="ChEBI" id="CHEBI:58349"/>
    </ligand>
</feature>
<feature type="binding site" evidence="1">
    <location>
        <position position="49"/>
    </location>
    <ligand>
        <name>NADP(+)</name>
        <dbReference type="ChEBI" id="CHEBI:58349"/>
    </ligand>
</feature>
<feature type="binding site" evidence="1">
    <location>
        <position position="52"/>
    </location>
    <ligand>
        <name>NADP(+)</name>
        <dbReference type="ChEBI" id="CHEBI:58349"/>
    </ligand>
</feature>
<feature type="binding site" evidence="1">
    <location>
        <position position="54"/>
    </location>
    <ligand>
        <name>NADP(+)</name>
        <dbReference type="ChEBI" id="CHEBI:58349"/>
    </ligand>
</feature>
<feature type="binding site" evidence="1">
    <location>
        <begin position="84"/>
        <end position="87"/>
    </location>
    <ligand>
        <name>NADP(+)</name>
        <dbReference type="ChEBI" id="CHEBI:58349"/>
    </ligand>
</feature>
<feature type="binding site" evidence="1">
    <location>
        <position position="135"/>
    </location>
    <ligand>
        <name>NADP(+)</name>
        <dbReference type="ChEBI" id="CHEBI:58349"/>
    </ligand>
</feature>
<feature type="binding site" evidence="1">
    <location>
        <position position="192"/>
    </location>
    <ligand>
        <name>Mg(2+)</name>
        <dbReference type="ChEBI" id="CHEBI:18420"/>
        <label>1</label>
    </ligand>
</feature>
<feature type="binding site" evidence="1">
    <location>
        <position position="192"/>
    </location>
    <ligand>
        <name>Mg(2+)</name>
        <dbReference type="ChEBI" id="CHEBI:18420"/>
        <label>2</label>
    </ligand>
</feature>
<feature type="binding site" evidence="1">
    <location>
        <position position="196"/>
    </location>
    <ligand>
        <name>Mg(2+)</name>
        <dbReference type="ChEBI" id="CHEBI:18420"/>
        <label>1</label>
    </ligand>
</feature>
<feature type="binding site" evidence="1">
    <location>
        <position position="228"/>
    </location>
    <ligand>
        <name>Mg(2+)</name>
        <dbReference type="ChEBI" id="CHEBI:18420"/>
        <label>2</label>
    </ligand>
</feature>
<feature type="binding site" evidence="1">
    <location>
        <position position="232"/>
    </location>
    <ligand>
        <name>Mg(2+)</name>
        <dbReference type="ChEBI" id="CHEBI:18420"/>
        <label>2</label>
    </ligand>
</feature>
<feature type="binding site" evidence="1">
    <location>
        <position position="253"/>
    </location>
    <ligand>
        <name>substrate</name>
    </ligand>
</feature>
<keyword id="KW-0028">Amino-acid biosynthesis</keyword>
<keyword id="KW-0100">Branched-chain amino acid biosynthesis</keyword>
<keyword id="KW-0460">Magnesium</keyword>
<keyword id="KW-0479">Metal-binding</keyword>
<keyword id="KW-0521">NADP</keyword>
<keyword id="KW-0560">Oxidoreductase</keyword>
<keyword id="KW-1185">Reference proteome</keyword>
<sequence>MSAKMYYDRDVDTQVLENKLIAIIGYGSQAHAHAQNLRDSGFNVVVGLREGSSSKAKAEQAGLRVASIEDATKEADVVMLLIPDEQQPAVYEKSIAPHLTAGKALAFGHGFNVHFGRIKPPADVDVFLVAPKGPGHMLRRVYTDGAGMPGIFAVQQDASGKARDIALAYARGIGCTKAGVLETTFKEETETDLFGEQSVLCGGVTHLIQAGFETLVEAGYQPEIAYFETLHEVKLIVDLIYEKGFEGMRHSISNTAEFGDYVTGPRIITDQTKAEMKNVLGDIQSGKFAESFIKDAESGFPYMNEQRSKMRDHTVEKVGKELRDQMPFINKKELEV</sequence>
<gene>
    <name evidence="1" type="primary">ilvC</name>
    <name type="ordered locus">DR_1519</name>
</gene>
<accession>Q9RU74</accession>
<name>ILVC_DEIRA</name>
<organism>
    <name type="scientific">Deinococcus radiodurans (strain ATCC 13939 / DSM 20539 / JCM 16871 / CCUG 27074 / LMG 4051 / NBRC 15346 / NCIMB 9279 / VKM B-1422 / R1)</name>
    <dbReference type="NCBI Taxonomy" id="243230"/>
    <lineage>
        <taxon>Bacteria</taxon>
        <taxon>Thermotogati</taxon>
        <taxon>Deinococcota</taxon>
        <taxon>Deinococci</taxon>
        <taxon>Deinococcales</taxon>
        <taxon>Deinococcaceae</taxon>
        <taxon>Deinococcus</taxon>
    </lineage>
</organism>
<evidence type="ECO:0000255" key="1">
    <source>
        <dbReference type="HAMAP-Rule" id="MF_00435"/>
    </source>
</evidence>
<evidence type="ECO:0000255" key="2">
    <source>
        <dbReference type="PROSITE-ProRule" id="PRU01197"/>
    </source>
</evidence>
<evidence type="ECO:0000255" key="3">
    <source>
        <dbReference type="PROSITE-ProRule" id="PRU01198"/>
    </source>
</evidence>
<evidence type="ECO:0000305" key="4"/>
<comment type="function">
    <text evidence="1">Involved in the biosynthesis of branched-chain amino acids (BCAA). Catalyzes an alkyl-migration followed by a ketol-acid reduction of (S)-2-acetolactate (S2AL) to yield (R)-2,3-dihydroxy-isovalerate. In the isomerase reaction, S2AL is rearranged via a Mg-dependent methyl migration to produce 3-hydroxy-3-methyl-2-ketobutyrate (HMKB). In the reductase reaction, this 2-ketoacid undergoes a metal-dependent reduction by NADPH to yield (R)-2,3-dihydroxy-isovalerate.</text>
</comment>
<comment type="catalytic activity">
    <reaction evidence="1">
        <text>(2R)-2,3-dihydroxy-3-methylbutanoate + NADP(+) = (2S)-2-acetolactate + NADPH + H(+)</text>
        <dbReference type="Rhea" id="RHEA:22068"/>
        <dbReference type="ChEBI" id="CHEBI:15378"/>
        <dbReference type="ChEBI" id="CHEBI:49072"/>
        <dbReference type="ChEBI" id="CHEBI:57783"/>
        <dbReference type="ChEBI" id="CHEBI:58349"/>
        <dbReference type="ChEBI" id="CHEBI:58476"/>
        <dbReference type="EC" id="1.1.1.86"/>
    </reaction>
</comment>
<comment type="catalytic activity">
    <reaction evidence="1">
        <text>(2R,3R)-2,3-dihydroxy-3-methylpentanoate + NADP(+) = (S)-2-ethyl-2-hydroxy-3-oxobutanoate + NADPH + H(+)</text>
        <dbReference type="Rhea" id="RHEA:13493"/>
        <dbReference type="ChEBI" id="CHEBI:15378"/>
        <dbReference type="ChEBI" id="CHEBI:49256"/>
        <dbReference type="ChEBI" id="CHEBI:49258"/>
        <dbReference type="ChEBI" id="CHEBI:57783"/>
        <dbReference type="ChEBI" id="CHEBI:58349"/>
        <dbReference type="EC" id="1.1.1.86"/>
    </reaction>
</comment>
<comment type="cofactor">
    <cofactor evidence="1">
        <name>Mg(2+)</name>
        <dbReference type="ChEBI" id="CHEBI:18420"/>
    </cofactor>
    <text evidence="1">Binds 2 magnesium ions per subunit.</text>
</comment>
<comment type="pathway">
    <text evidence="1">Amino-acid biosynthesis; L-isoleucine biosynthesis; L-isoleucine from 2-oxobutanoate: step 2/4.</text>
</comment>
<comment type="pathway">
    <text evidence="1">Amino-acid biosynthesis; L-valine biosynthesis; L-valine from pyruvate: step 2/4.</text>
</comment>
<comment type="similarity">
    <text evidence="1">Belongs to the ketol-acid reductoisomerase family.</text>
</comment>
<comment type="sequence caution" evidence="4">
    <conflict type="erroneous initiation">
        <sequence resource="EMBL-CDS" id="AAF11083"/>
    </conflict>
</comment>